<comment type="subcellular location">
    <subcellularLocation>
        <location evidence="1">Cytoplasm</location>
    </subcellularLocation>
</comment>
<comment type="tissue specificity">
    <text evidence="3">Expressed at highest levels in brain and kidney. Also detected in stomach, thymus and skeletal muscle.</text>
</comment>
<feature type="chain" id="PRO_0000304805" description="PI-PLC X domain-containing protein 1">
    <location>
        <begin position="1"/>
        <end position="345"/>
    </location>
</feature>
<feature type="domain" description="PI-PLC X-box" evidence="2">
    <location>
        <begin position="52"/>
        <end position="228"/>
    </location>
</feature>
<feature type="sequence conflict" description="In Ref. 2; BAC30356." evidence="4" ref="2">
    <original>N</original>
    <variation>S</variation>
    <location>
        <position position="339"/>
    </location>
</feature>
<evidence type="ECO:0000250" key="1">
    <source>
        <dbReference type="UniProtKB" id="Q9NUJ7"/>
    </source>
</evidence>
<evidence type="ECO:0000255" key="2">
    <source>
        <dbReference type="PROSITE-ProRule" id="PRU00270"/>
    </source>
</evidence>
<evidence type="ECO:0000269" key="3">
    <source>
    </source>
</evidence>
<evidence type="ECO:0000305" key="4"/>
<sequence length="345" mass="38718">MQGLEPSRVGRVGEVCRSVHKNVLTVPEHTVGTEAAAPMGDQADWMSQLCPQLWDVPLHHLSIPGSHDTMTYCLNRKSRISRASSWLLHLLGRVVPFITGPVVMKWSVTQTLDVTQQLDAGVRYLDLRIAHAPEGSTRNLCFVHMMYTKALVEDTLTEIAEWLQSHPREVVILACRNFEGMTCELHDYLAGCIVNIFGDMLCPSGEVPTLRQLWAREQQVIVSYEDEATVSRYDQLWPAIPYWWGNAVKTDVLLRFLETMKGQGRPDGLFVAGINITENLCYILLHPVDSLEEMTRRSLPLMTEWVCAQQPGQSPQCTNIIAGDFVDADGFVSKVISLNCKLLSP</sequence>
<organism>
    <name type="scientific">Mus musculus</name>
    <name type="common">Mouse</name>
    <dbReference type="NCBI Taxonomy" id="10090"/>
    <lineage>
        <taxon>Eukaryota</taxon>
        <taxon>Metazoa</taxon>
        <taxon>Chordata</taxon>
        <taxon>Craniata</taxon>
        <taxon>Vertebrata</taxon>
        <taxon>Euteleostomi</taxon>
        <taxon>Mammalia</taxon>
        <taxon>Eutheria</taxon>
        <taxon>Euarchontoglires</taxon>
        <taxon>Glires</taxon>
        <taxon>Rodentia</taxon>
        <taxon>Myomorpha</taxon>
        <taxon>Muroidea</taxon>
        <taxon>Muridae</taxon>
        <taxon>Murinae</taxon>
        <taxon>Mus</taxon>
        <taxon>Mus</taxon>
    </lineage>
</organism>
<reference key="1">
    <citation type="journal article" date="2004" name="Genome Res.">
        <title>The status, quality, and expansion of the NIH full-length cDNA project: the Mammalian Gene Collection (MGC).</title>
        <authorList>
            <consortium name="The MGC Project Team"/>
        </authorList>
    </citation>
    <scope>NUCLEOTIDE SEQUENCE [LARGE SCALE MRNA]</scope>
    <source>
        <strain>Czech II</strain>
        <tissue>Mammary tumor</tissue>
    </source>
</reference>
<reference key="2">
    <citation type="journal article" date="2005" name="Science">
        <title>The transcriptional landscape of the mammalian genome.</title>
        <authorList>
            <person name="Carninci P."/>
            <person name="Kasukawa T."/>
            <person name="Katayama S."/>
            <person name="Gough J."/>
            <person name="Frith M.C."/>
            <person name="Maeda N."/>
            <person name="Oyama R."/>
            <person name="Ravasi T."/>
            <person name="Lenhard B."/>
            <person name="Wells C."/>
            <person name="Kodzius R."/>
            <person name="Shimokawa K."/>
            <person name="Bajic V.B."/>
            <person name="Brenner S.E."/>
            <person name="Batalov S."/>
            <person name="Forrest A.R."/>
            <person name="Zavolan M."/>
            <person name="Davis M.J."/>
            <person name="Wilming L.G."/>
            <person name="Aidinis V."/>
            <person name="Allen J.E."/>
            <person name="Ambesi-Impiombato A."/>
            <person name="Apweiler R."/>
            <person name="Aturaliya R.N."/>
            <person name="Bailey T.L."/>
            <person name="Bansal M."/>
            <person name="Baxter L."/>
            <person name="Beisel K.W."/>
            <person name="Bersano T."/>
            <person name="Bono H."/>
            <person name="Chalk A.M."/>
            <person name="Chiu K.P."/>
            <person name="Choudhary V."/>
            <person name="Christoffels A."/>
            <person name="Clutterbuck D.R."/>
            <person name="Crowe M.L."/>
            <person name="Dalla E."/>
            <person name="Dalrymple B.P."/>
            <person name="de Bono B."/>
            <person name="Della Gatta G."/>
            <person name="di Bernardo D."/>
            <person name="Down T."/>
            <person name="Engstrom P."/>
            <person name="Fagiolini M."/>
            <person name="Faulkner G."/>
            <person name="Fletcher C.F."/>
            <person name="Fukushima T."/>
            <person name="Furuno M."/>
            <person name="Futaki S."/>
            <person name="Gariboldi M."/>
            <person name="Georgii-Hemming P."/>
            <person name="Gingeras T.R."/>
            <person name="Gojobori T."/>
            <person name="Green R.E."/>
            <person name="Gustincich S."/>
            <person name="Harbers M."/>
            <person name="Hayashi Y."/>
            <person name="Hensch T.K."/>
            <person name="Hirokawa N."/>
            <person name="Hill D."/>
            <person name="Huminiecki L."/>
            <person name="Iacono M."/>
            <person name="Ikeo K."/>
            <person name="Iwama A."/>
            <person name="Ishikawa T."/>
            <person name="Jakt M."/>
            <person name="Kanapin A."/>
            <person name="Katoh M."/>
            <person name="Kawasawa Y."/>
            <person name="Kelso J."/>
            <person name="Kitamura H."/>
            <person name="Kitano H."/>
            <person name="Kollias G."/>
            <person name="Krishnan S.P."/>
            <person name="Kruger A."/>
            <person name="Kummerfeld S.K."/>
            <person name="Kurochkin I.V."/>
            <person name="Lareau L.F."/>
            <person name="Lazarevic D."/>
            <person name="Lipovich L."/>
            <person name="Liu J."/>
            <person name="Liuni S."/>
            <person name="McWilliam S."/>
            <person name="Madan Babu M."/>
            <person name="Madera M."/>
            <person name="Marchionni L."/>
            <person name="Matsuda H."/>
            <person name="Matsuzawa S."/>
            <person name="Miki H."/>
            <person name="Mignone F."/>
            <person name="Miyake S."/>
            <person name="Morris K."/>
            <person name="Mottagui-Tabar S."/>
            <person name="Mulder N."/>
            <person name="Nakano N."/>
            <person name="Nakauchi H."/>
            <person name="Ng P."/>
            <person name="Nilsson R."/>
            <person name="Nishiguchi S."/>
            <person name="Nishikawa S."/>
            <person name="Nori F."/>
            <person name="Ohara O."/>
            <person name="Okazaki Y."/>
            <person name="Orlando V."/>
            <person name="Pang K.C."/>
            <person name="Pavan W.J."/>
            <person name="Pavesi G."/>
            <person name="Pesole G."/>
            <person name="Petrovsky N."/>
            <person name="Piazza S."/>
            <person name="Reed J."/>
            <person name="Reid J.F."/>
            <person name="Ring B.Z."/>
            <person name="Ringwald M."/>
            <person name="Rost B."/>
            <person name="Ruan Y."/>
            <person name="Salzberg S.L."/>
            <person name="Sandelin A."/>
            <person name="Schneider C."/>
            <person name="Schoenbach C."/>
            <person name="Sekiguchi K."/>
            <person name="Semple C.A."/>
            <person name="Seno S."/>
            <person name="Sessa L."/>
            <person name="Sheng Y."/>
            <person name="Shibata Y."/>
            <person name="Shimada H."/>
            <person name="Shimada K."/>
            <person name="Silva D."/>
            <person name="Sinclair B."/>
            <person name="Sperling S."/>
            <person name="Stupka E."/>
            <person name="Sugiura K."/>
            <person name="Sultana R."/>
            <person name="Takenaka Y."/>
            <person name="Taki K."/>
            <person name="Tammoja K."/>
            <person name="Tan S.L."/>
            <person name="Tang S."/>
            <person name="Taylor M.S."/>
            <person name="Tegner J."/>
            <person name="Teichmann S.A."/>
            <person name="Ueda H.R."/>
            <person name="van Nimwegen E."/>
            <person name="Verardo R."/>
            <person name="Wei C.L."/>
            <person name="Yagi K."/>
            <person name="Yamanishi H."/>
            <person name="Zabarovsky E."/>
            <person name="Zhu S."/>
            <person name="Zimmer A."/>
            <person name="Hide W."/>
            <person name="Bult C."/>
            <person name="Grimmond S.M."/>
            <person name="Teasdale R.D."/>
            <person name="Liu E.T."/>
            <person name="Brusic V."/>
            <person name="Quackenbush J."/>
            <person name="Wahlestedt C."/>
            <person name="Mattick J.S."/>
            <person name="Hume D.A."/>
            <person name="Kai C."/>
            <person name="Sasaki D."/>
            <person name="Tomaru Y."/>
            <person name="Fukuda S."/>
            <person name="Kanamori-Katayama M."/>
            <person name="Suzuki M."/>
            <person name="Aoki J."/>
            <person name="Arakawa T."/>
            <person name="Iida J."/>
            <person name="Imamura K."/>
            <person name="Itoh M."/>
            <person name="Kato T."/>
            <person name="Kawaji H."/>
            <person name="Kawagashira N."/>
            <person name="Kawashima T."/>
            <person name="Kojima M."/>
            <person name="Kondo S."/>
            <person name="Konno H."/>
            <person name="Nakano K."/>
            <person name="Ninomiya N."/>
            <person name="Nishio T."/>
            <person name="Okada M."/>
            <person name="Plessy C."/>
            <person name="Shibata K."/>
            <person name="Shiraki T."/>
            <person name="Suzuki S."/>
            <person name="Tagami M."/>
            <person name="Waki K."/>
            <person name="Watahiki A."/>
            <person name="Okamura-Oho Y."/>
            <person name="Suzuki H."/>
            <person name="Kawai J."/>
            <person name="Hayashizaki Y."/>
        </authorList>
    </citation>
    <scope>NUCLEOTIDE SEQUENCE [LARGE SCALE MRNA] OF 46-345</scope>
    <source>
        <strain>C57BL/6J</strain>
        <tissue>Spinal cord</tissue>
    </source>
</reference>
<reference key="3">
    <citation type="journal article" date="2012" name="Biochem. Biophys. Res. Commun.">
        <title>Cloning, tissue distribution and sub-cellular localisation of phospholipase C X-domain containing protein (PLCXD) isoforms.</title>
        <authorList>
            <person name="Gellatly S.A."/>
            <person name="Kalujnaia S."/>
            <person name="Cramb G."/>
        </authorList>
    </citation>
    <scope>TISSUE SPECIFICITY</scope>
</reference>
<keyword id="KW-0963">Cytoplasm</keyword>
<keyword id="KW-1185">Reference proteome</keyword>
<name>PLCX1_MOUSE</name>
<dbReference type="EMBL" id="AK039459">
    <property type="protein sequence ID" value="BAC30356.1"/>
    <property type="molecule type" value="mRNA"/>
</dbReference>
<dbReference type="EMBL" id="BC039627">
    <property type="protein sequence ID" value="AAH39627.1"/>
    <property type="molecule type" value="mRNA"/>
</dbReference>
<dbReference type="SMR" id="Q8CHS4"/>
<dbReference type="FunCoup" id="Q8CHS4">
    <property type="interactions" value="1"/>
</dbReference>
<dbReference type="STRING" id="10090.ENSMUSP00000083892"/>
<dbReference type="PhosphoSitePlus" id="Q8CHS4"/>
<dbReference type="PaxDb" id="10090-ENSMUSP00000083892"/>
<dbReference type="UCSC" id="uc012eax.1">
    <property type="organism name" value="mouse"/>
</dbReference>
<dbReference type="AGR" id="MGI:2685422"/>
<dbReference type="MGI" id="MGI:2685422">
    <property type="gene designation" value="Plcxd1"/>
</dbReference>
<dbReference type="eggNOG" id="KOG4306">
    <property type="taxonomic scope" value="Eukaryota"/>
</dbReference>
<dbReference type="InParanoid" id="Q8CHS4"/>
<dbReference type="PhylomeDB" id="Q8CHS4"/>
<dbReference type="ChiTaRS" id="Plcxd1">
    <property type="organism name" value="mouse"/>
</dbReference>
<dbReference type="PRO" id="PR:Q8CHS4"/>
<dbReference type="Proteomes" id="UP000000589">
    <property type="component" value="Unplaced"/>
</dbReference>
<dbReference type="RNAct" id="Q8CHS4">
    <property type="molecule type" value="protein"/>
</dbReference>
<dbReference type="GO" id="GO:0005737">
    <property type="term" value="C:cytoplasm"/>
    <property type="evidence" value="ECO:0007669"/>
    <property type="project" value="UniProtKB-SubCell"/>
</dbReference>
<dbReference type="GO" id="GO:0008081">
    <property type="term" value="F:phosphoric diester hydrolase activity"/>
    <property type="evidence" value="ECO:0007669"/>
    <property type="project" value="InterPro"/>
</dbReference>
<dbReference type="GO" id="GO:0006629">
    <property type="term" value="P:lipid metabolic process"/>
    <property type="evidence" value="ECO:0007669"/>
    <property type="project" value="InterPro"/>
</dbReference>
<dbReference type="CDD" id="cd08616">
    <property type="entry name" value="PI-PLCXD1c"/>
    <property type="match status" value="1"/>
</dbReference>
<dbReference type="Gene3D" id="3.20.20.190">
    <property type="entry name" value="Phosphatidylinositol (PI) phosphodiesterase"/>
    <property type="match status" value="1"/>
</dbReference>
<dbReference type="InterPro" id="IPR051057">
    <property type="entry name" value="PI-PLC_domain"/>
</dbReference>
<dbReference type="InterPro" id="IPR017946">
    <property type="entry name" value="PLC-like_Pdiesterase_TIM-brl"/>
</dbReference>
<dbReference type="InterPro" id="IPR042158">
    <property type="entry name" value="PLCXD1/2/3"/>
</dbReference>
<dbReference type="InterPro" id="IPR000909">
    <property type="entry name" value="PLipase_C_PInositol-sp_X_dom"/>
</dbReference>
<dbReference type="PANTHER" id="PTHR13593">
    <property type="match status" value="1"/>
</dbReference>
<dbReference type="PANTHER" id="PTHR13593:SF24">
    <property type="entry name" value="PI-PLC X DOMAIN-CONTAINING PROTEIN 1"/>
    <property type="match status" value="1"/>
</dbReference>
<dbReference type="Pfam" id="PF00388">
    <property type="entry name" value="PI-PLC-X"/>
    <property type="match status" value="1"/>
</dbReference>
<dbReference type="SMART" id="SM00148">
    <property type="entry name" value="PLCXc"/>
    <property type="match status" value="1"/>
</dbReference>
<dbReference type="SUPFAM" id="SSF51695">
    <property type="entry name" value="PLC-like phosphodiesterases"/>
    <property type="match status" value="1"/>
</dbReference>
<dbReference type="PROSITE" id="PS50007">
    <property type="entry name" value="PIPLC_X_DOMAIN"/>
    <property type="match status" value="1"/>
</dbReference>
<gene>
    <name type="primary">Plcxd1</name>
</gene>
<accession>Q8CHS4</accession>
<accession>Q8BYI5</accession>
<protein>
    <recommendedName>
        <fullName>PI-PLC X domain-containing protein 1</fullName>
    </recommendedName>
</protein>
<proteinExistence type="evidence at transcript level"/>